<evidence type="ECO:0000255" key="1">
    <source>
        <dbReference type="HAMAP-Rule" id="MF_01904"/>
    </source>
</evidence>
<accession>Q8PS70</accession>
<dbReference type="EC" id="4.1.1.31" evidence="1"/>
<dbReference type="EMBL" id="AE008384">
    <property type="protein sequence ID" value="AAM32908.1"/>
    <property type="molecule type" value="Genomic_DNA"/>
</dbReference>
<dbReference type="RefSeq" id="WP_011035107.1">
    <property type="nucleotide sequence ID" value="NC_003901.1"/>
</dbReference>
<dbReference type="SMR" id="Q8PS70"/>
<dbReference type="GeneID" id="82162315"/>
<dbReference type="KEGG" id="mma:MM_3212"/>
<dbReference type="PATRIC" id="fig|192952.21.peg.3732"/>
<dbReference type="eggNOG" id="arCOG04435">
    <property type="taxonomic scope" value="Archaea"/>
</dbReference>
<dbReference type="HOGENOM" id="CLU_517433_0_0_2"/>
<dbReference type="Proteomes" id="UP000000595">
    <property type="component" value="Chromosome"/>
</dbReference>
<dbReference type="GO" id="GO:0000287">
    <property type="term" value="F:magnesium ion binding"/>
    <property type="evidence" value="ECO:0007669"/>
    <property type="project" value="UniProtKB-UniRule"/>
</dbReference>
<dbReference type="GO" id="GO:0008964">
    <property type="term" value="F:phosphoenolpyruvate carboxylase activity"/>
    <property type="evidence" value="ECO:0007669"/>
    <property type="project" value="UniProtKB-UniRule"/>
</dbReference>
<dbReference type="GO" id="GO:0015977">
    <property type="term" value="P:carbon fixation"/>
    <property type="evidence" value="ECO:0007669"/>
    <property type="project" value="UniProtKB-UniRule"/>
</dbReference>
<dbReference type="GO" id="GO:0006107">
    <property type="term" value="P:oxaloacetate metabolic process"/>
    <property type="evidence" value="ECO:0007669"/>
    <property type="project" value="UniProtKB-UniRule"/>
</dbReference>
<dbReference type="GO" id="GO:0006099">
    <property type="term" value="P:tricarboxylic acid cycle"/>
    <property type="evidence" value="ECO:0007669"/>
    <property type="project" value="InterPro"/>
</dbReference>
<dbReference type="HAMAP" id="MF_01904">
    <property type="entry name" value="PEPcase_type2"/>
    <property type="match status" value="1"/>
</dbReference>
<dbReference type="InterPro" id="IPR007566">
    <property type="entry name" value="PEP_COase_arc-type"/>
</dbReference>
<dbReference type="InterPro" id="IPR015813">
    <property type="entry name" value="Pyrv/PenolPyrv_kinase-like_dom"/>
</dbReference>
<dbReference type="NCBIfam" id="TIGR02751">
    <property type="entry name" value="PEPCase_arch"/>
    <property type="match status" value="1"/>
</dbReference>
<dbReference type="Pfam" id="PF14010">
    <property type="entry name" value="PEPcase_2"/>
    <property type="match status" value="1"/>
</dbReference>
<dbReference type="PIRSF" id="PIRSF006677">
    <property type="entry name" value="UCP006677"/>
    <property type="match status" value="1"/>
</dbReference>
<dbReference type="SUPFAM" id="SSF51621">
    <property type="entry name" value="Phosphoenolpyruvate/pyruvate domain"/>
    <property type="match status" value="1"/>
</dbReference>
<organism>
    <name type="scientific">Methanosarcina mazei (strain ATCC BAA-159 / DSM 3647 / Goe1 / Go1 / JCM 11833 / OCM 88)</name>
    <name type="common">Methanosarcina frisia</name>
    <dbReference type="NCBI Taxonomy" id="192952"/>
    <lineage>
        <taxon>Archaea</taxon>
        <taxon>Methanobacteriati</taxon>
        <taxon>Methanobacteriota</taxon>
        <taxon>Stenosarchaea group</taxon>
        <taxon>Methanomicrobia</taxon>
        <taxon>Methanosarcinales</taxon>
        <taxon>Methanosarcinaceae</taxon>
        <taxon>Methanosarcina</taxon>
    </lineage>
</organism>
<gene>
    <name evidence="1" type="primary">ppcA</name>
    <name type="ordered locus">MM_3212</name>
</gene>
<feature type="chain" id="PRO_0000309604" description="Phosphoenolpyruvate carboxylase">
    <location>
        <begin position="1"/>
        <end position="526"/>
    </location>
</feature>
<comment type="function">
    <text evidence="1">Catalyzes the irreversible beta-carboxylation of phosphoenolpyruvate (PEP) to form oxaloacetate (OAA), a four-carbon dicarboxylic acid source for the tricarboxylic acid cycle.</text>
</comment>
<comment type="catalytic activity">
    <reaction evidence="1">
        <text>oxaloacetate + phosphate = phosphoenolpyruvate + hydrogencarbonate</text>
        <dbReference type="Rhea" id="RHEA:28370"/>
        <dbReference type="ChEBI" id="CHEBI:16452"/>
        <dbReference type="ChEBI" id="CHEBI:17544"/>
        <dbReference type="ChEBI" id="CHEBI:43474"/>
        <dbReference type="ChEBI" id="CHEBI:58702"/>
        <dbReference type="EC" id="4.1.1.31"/>
    </reaction>
</comment>
<comment type="cofactor">
    <cofactor evidence="1">
        <name>Mg(2+)</name>
        <dbReference type="ChEBI" id="CHEBI:18420"/>
    </cofactor>
</comment>
<comment type="subunit">
    <text evidence="1">Homotetramer.</text>
</comment>
<comment type="similarity">
    <text evidence="1">Belongs to the PEPCase type 2 family.</text>
</comment>
<protein>
    <recommendedName>
        <fullName evidence="1">Phosphoenolpyruvate carboxylase</fullName>
        <shortName evidence="1">PEPC</shortName>
        <shortName evidence="1">PEPCase</shortName>
        <ecNumber evidence="1">4.1.1.31</ecNumber>
    </recommendedName>
</protein>
<keyword id="KW-0120">Carbon dioxide fixation</keyword>
<keyword id="KW-0456">Lyase</keyword>
<keyword id="KW-0460">Magnesium</keyword>
<proteinExistence type="inferred from homology"/>
<sequence length="526" mass="58177">MSKKATYPKVMCTQHPDSASKYISTQEEPGEAIEAAVVFGCDEYMPDYEGKATPYHQNVQIVSRFIEETDLIPGKDIFITPRAPSAAQENRFRQLMVMMSIAEANHGALEYSDVQAINEFVHPMTGTVGEILDAQQHMVDVGELAKKEFGVAMEVPRIIPLIEDAPALLHAKELAENTLLSWEKRFGAAPEKFRVFLGKSDSALSFGHVASTLSCKYAISGISELDLELDTSTGIIFGAGTLPFRGHLSLKNAENFFREYRGIGTITLQSAVRYSHDKGEAEALVRLAEERLPESPEIYSGEEKEEIVNLIGIFGARYNRIIREMSCTINQLAGLLPQQRDRLMHKGTGGYSRNVPDISGLVCLCRKDVGKELSASMPAEDLNLPRAIKFTGALYSIGLPPEFIGTGTALEEAREKLGEEACERLLKKYFPSLASDLSFASGYLDLNVASRFLPEACLKEIRKDIEVLRDTFSLKVQPEPSYRILLEMMQPDLLQAGTKGNCMDEEVSQLVCSTLTKMGKIRKALG</sequence>
<name>CAPPA_METMA</name>
<reference key="1">
    <citation type="journal article" date="2002" name="J. Mol. Microbiol. Biotechnol.">
        <title>The genome of Methanosarcina mazei: evidence for lateral gene transfer between Bacteria and Archaea.</title>
        <authorList>
            <person name="Deppenmeier U."/>
            <person name="Johann A."/>
            <person name="Hartsch T."/>
            <person name="Merkl R."/>
            <person name="Schmitz R.A."/>
            <person name="Martinez-Arias R."/>
            <person name="Henne A."/>
            <person name="Wiezer A."/>
            <person name="Baeumer S."/>
            <person name="Jacobi C."/>
            <person name="Brueggemann H."/>
            <person name="Lienard T."/>
            <person name="Christmann A."/>
            <person name="Boemecke M."/>
            <person name="Steckel S."/>
            <person name="Bhattacharyya A."/>
            <person name="Lykidis A."/>
            <person name="Overbeek R."/>
            <person name="Klenk H.-P."/>
            <person name="Gunsalus R.P."/>
            <person name="Fritz H.-J."/>
            <person name="Gottschalk G."/>
        </authorList>
    </citation>
    <scope>NUCLEOTIDE SEQUENCE [LARGE SCALE GENOMIC DNA]</scope>
    <source>
        <strain>ATCC BAA-159 / DSM 3647 / Goe1 / Go1 / JCM 11833 / OCM 88</strain>
    </source>
</reference>